<comment type="function">
    <text evidence="1">This enzyme is involved in nucleotide metabolism: it produces dUMP, the immediate precursor of thymidine nucleotides and it decreases the intracellular concentration of dUTP so that uracil cannot be incorporated into DNA.</text>
</comment>
<comment type="catalytic activity">
    <reaction evidence="1">
        <text>dUTP + H2O = dUMP + diphosphate + H(+)</text>
        <dbReference type="Rhea" id="RHEA:10248"/>
        <dbReference type="ChEBI" id="CHEBI:15377"/>
        <dbReference type="ChEBI" id="CHEBI:15378"/>
        <dbReference type="ChEBI" id="CHEBI:33019"/>
        <dbReference type="ChEBI" id="CHEBI:61555"/>
        <dbReference type="ChEBI" id="CHEBI:246422"/>
        <dbReference type="EC" id="3.6.1.23"/>
    </reaction>
</comment>
<comment type="pathway">
    <text evidence="1">Pyrimidine metabolism; dUMP biosynthesis; dUMP from dCTP (dUTP route): step 2/2.</text>
</comment>
<comment type="similarity">
    <text evidence="1">Belongs to the dCTP deaminase family. Archaeal dUTPase subfamily.</text>
</comment>
<sequence>MYERGAFVADHVEPVADDQIQPNGVDLTVDAVLEQTEPGRIDTDGKTIGDRSPVTPTADEDSTDTTVTIQPGTYILQYAETITIPENHVGFVYPRSSLMRNSCMLHSAVWDAGYTGRGEGLFEVHHEITIARGARVAQLVLATGDHENTYDGSYQHERTDTRPGE</sequence>
<accession>B0R858</accession>
<proteinExistence type="inferred from homology"/>
<keyword id="KW-0378">Hydrolase</keyword>
<keyword id="KW-0546">Nucleotide metabolism</keyword>
<organism>
    <name type="scientific">Halobacterium salinarum (strain ATCC 29341 / DSM 671 / R1)</name>
    <dbReference type="NCBI Taxonomy" id="478009"/>
    <lineage>
        <taxon>Archaea</taxon>
        <taxon>Methanobacteriati</taxon>
        <taxon>Methanobacteriota</taxon>
        <taxon>Stenosarchaea group</taxon>
        <taxon>Halobacteria</taxon>
        <taxon>Halobacteriales</taxon>
        <taxon>Halobacteriaceae</taxon>
        <taxon>Halobacterium</taxon>
        <taxon>Halobacterium salinarum NRC-34001</taxon>
    </lineage>
</organism>
<protein>
    <recommendedName>
        <fullName evidence="1">Probable deoxyuridine 5'-triphosphate nucleotidohydrolase</fullName>
        <shortName evidence="1">dUTPase</shortName>
        <ecNumber evidence="1">3.6.1.23</ecNumber>
    </recommendedName>
    <alternativeName>
        <fullName evidence="1">dUTP pyrophosphatase</fullName>
    </alternativeName>
</protein>
<evidence type="ECO:0000255" key="1">
    <source>
        <dbReference type="HAMAP-Rule" id="MF_00635"/>
    </source>
</evidence>
<evidence type="ECO:0000256" key="2">
    <source>
        <dbReference type="SAM" id="MobiDB-lite"/>
    </source>
</evidence>
<feature type="chain" id="PRO_1000130718" description="Probable deoxyuridine 5'-triphosphate nucleotidohydrolase">
    <location>
        <begin position="1"/>
        <end position="165"/>
    </location>
</feature>
<feature type="region of interest" description="Disordered" evidence="2">
    <location>
        <begin position="39"/>
        <end position="64"/>
    </location>
</feature>
<feature type="compositionally biased region" description="Basic and acidic residues" evidence="2">
    <location>
        <begin position="39"/>
        <end position="49"/>
    </location>
</feature>
<name>DUT_HALS3</name>
<dbReference type="EC" id="3.6.1.23" evidence="1"/>
<dbReference type="EMBL" id="AM774415">
    <property type="protein sequence ID" value="CAP14927.1"/>
    <property type="molecule type" value="Genomic_DNA"/>
</dbReference>
<dbReference type="RefSeq" id="WP_010903920.1">
    <property type="nucleotide sequence ID" value="NC_010364.1"/>
</dbReference>
<dbReference type="SMR" id="B0R858"/>
<dbReference type="EnsemblBacteria" id="CAP14927">
    <property type="protein sequence ID" value="CAP14927"/>
    <property type="gene ID" value="OE_4610R"/>
</dbReference>
<dbReference type="KEGG" id="hsl:OE_4610R"/>
<dbReference type="HOGENOM" id="CLU_103451_1_0_2"/>
<dbReference type="PhylomeDB" id="B0R858"/>
<dbReference type="UniPathway" id="UPA00610">
    <property type="reaction ID" value="UER00666"/>
</dbReference>
<dbReference type="Proteomes" id="UP000001321">
    <property type="component" value="Chromosome"/>
</dbReference>
<dbReference type="GO" id="GO:0008829">
    <property type="term" value="F:dCTP deaminase activity"/>
    <property type="evidence" value="ECO:0007669"/>
    <property type="project" value="InterPro"/>
</dbReference>
<dbReference type="GO" id="GO:0004170">
    <property type="term" value="F:dUTP diphosphatase activity"/>
    <property type="evidence" value="ECO:0007669"/>
    <property type="project" value="UniProtKB-UniRule"/>
</dbReference>
<dbReference type="GO" id="GO:0006226">
    <property type="term" value="P:dUMP biosynthetic process"/>
    <property type="evidence" value="ECO:0007669"/>
    <property type="project" value="UniProtKB-UniRule"/>
</dbReference>
<dbReference type="GO" id="GO:0006229">
    <property type="term" value="P:dUTP biosynthetic process"/>
    <property type="evidence" value="ECO:0007669"/>
    <property type="project" value="InterPro"/>
</dbReference>
<dbReference type="CDD" id="cd07557">
    <property type="entry name" value="trimeric_dUTPase"/>
    <property type="match status" value="1"/>
</dbReference>
<dbReference type="Gene3D" id="2.70.40.10">
    <property type="match status" value="1"/>
</dbReference>
<dbReference type="HAMAP" id="MF_00635">
    <property type="entry name" value="dUTPase_arch"/>
    <property type="match status" value="1"/>
</dbReference>
<dbReference type="InterPro" id="IPR011962">
    <property type="entry name" value="dCTP_deaminase"/>
</dbReference>
<dbReference type="InterPro" id="IPR036157">
    <property type="entry name" value="dUTPase-like_sf"/>
</dbReference>
<dbReference type="InterPro" id="IPR023537">
    <property type="entry name" value="dUTPase_archaeal"/>
</dbReference>
<dbReference type="InterPro" id="IPR033704">
    <property type="entry name" value="dUTPase_trimeric"/>
</dbReference>
<dbReference type="NCBIfam" id="NF002598">
    <property type="entry name" value="PRK02253.1"/>
    <property type="match status" value="1"/>
</dbReference>
<dbReference type="PANTHER" id="PTHR42680">
    <property type="entry name" value="DCTP DEAMINASE"/>
    <property type="match status" value="1"/>
</dbReference>
<dbReference type="PANTHER" id="PTHR42680:SF1">
    <property type="entry name" value="DEOXYURIDINE 5'-TRIPHOSPHATE NUCLEOTIDOHYDROLASE"/>
    <property type="match status" value="1"/>
</dbReference>
<dbReference type="Pfam" id="PF22769">
    <property type="entry name" value="DCD"/>
    <property type="match status" value="1"/>
</dbReference>
<dbReference type="SUPFAM" id="SSF51283">
    <property type="entry name" value="dUTPase-like"/>
    <property type="match status" value="1"/>
</dbReference>
<gene>
    <name evidence="1" type="primary">dut</name>
    <name type="ordered locus">OE_4610R</name>
</gene>
<reference key="1">
    <citation type="journal article" date="2008" name="Genomics">
        <title>Evolution in the laboratory: the genome of Halobacterium salinarum strain R1 compared to that of strain NRC-1.</title>
        <authorList>
            <person name="Pfeiffer F."/>
            <person name="Schuster S.C."/>
            <person name="Broicher A."/>
            <person name="Falb M."/>
            <person name="Palm P."/>
            <person name="Rodewald K."/>
            <person name="Ruepp A."/>
            <person name="Soppa J."/>
            <person name="Tittor J."/>
            <person name="Oesterhelt D."/>
        </authorList>
    </citation>
    <scope>NUCLEOTIDE SEQUENCE [LARGE SCALE GENOMIC DNA]</scope>
    <source>
        <strain>ATCC 29341 / DSM 671 / R1</strain>
    </source>
</reference>